<keyword id="KW-0687">Ribonucleoprotein</keyword>
<keyword id="KW-0689">Ribosomal protein</keyword>
<organism>
    <name type="scientific">Burkholderia pseudomallei (strain 1710b)</name>
    <dbReference type="NCBI Taxonomy" id="320372"/>
    <lineage>
        <taxon>Bacteria</taxon>
        <taxon>Pseudomonadati</taxon>
        <taxon>Pseudomonadota</taxon>
        <taxon>Betaproteobacteria</taxon>
        <taxon>Burkholderiales</taxon>
        <taxon>Burkholderiaceae</taxon>
        <taxon>Burkholderia</taxon>
        <taxon>pseudomallei group</taxon>
    </lineage>
</organism>
<evidence type="ECO:0000255" key="1">
    <source>
        <dbReference type="HAMAP-Rule" id="MF_01368"/>
    </source>
</evidence>
<evidence type="ECO:0000305" key="2"/>
<proteinExistence type="inferred from homology"/>
<reference key="1">
    <citation type="journal article" date="2010" name="Genome Biol. Evol.">
        <title>Continuing evolution of Burkholderia mallei through genome reduction and large-scale rearrangements.</title>
        <authorList>
            <person name="Losada L."/>
            <person name="Ronning C.M."/>
            <person name="DeShazer D."/>
            <person name="Woods D."/>
            <person name="Fedorova N."/>
            <person name="Kim H.S."/>
            <person name="Shabalina S.A."/>
            <person name="Pearson T.R."/>
            <person name="Brinkac L."/>
            <person name="Tan P."/>
            <person name="Nandi T."/>
            <person name="Crabtree J."/>
            <person name="Badger J."/>
            <person name="Beckstrom-Sternberg S."/>
            <person name="Saqib M."/>
            <person name="Schutzer S.E."/>
            <person name="Keim P."/>
            <person name="Nierman W.C."/>
        </authorList>
    </citation>
    <scope>NUCLEOTIDE SEQUENCE [LARGE SCALE GENOMIC DNA]</scope>
    <source>
        <strain>1710b</strain>
    </source>
</reference>
<sequence>MRHRHGLRKLNRTSSHRLAMLRNMSNSLIEHEVIKTTLPKAKELRKVVEPLITLGKKPSLANRRLAFNRLRDRDSVAKLFDVLGPRFANRPGGYLRILKFGFRVGDNAPMALVELLDRPEVEETENVQEAE</sequence>
<accession>Q3JMU0</accession>
<name>RL17_BURP1</name>
<feature type="chain" id="PRO_0000267846" description="Large ribosomal subunit protein bL17">
    <location>
        <begin position="1"/>
        <end position="131"/>
    </location>
</feature>
<gene>
    <name evidence="1" type="primary">rplQ</name>
    <name type="ordered locus">BURPS1710b_3749</name>
</gene>
<comment type="subunit">
    <text evidence="1">Part of the 50S ribosomal subunit. Contacts protein L32.</text>
</comment>
<comment type="similarity">
    <text evidence="1">Belongs to the bacterial ribosomal protein bL17 family.</text>
</comment>
<dbReference type="EMBL" id="CP000124">
    <property type="protein sequence ID" value="ABA48613.1"/>
    <property type="molecule type" value="Genomic_DNA"/>
</dbReference>
<dbReference type="RefSeq" id="WP_004197924.1">
    <property type="nucleotide sequence ID" value="NC_007434.1"/>
</dbReference>
<dbReference type="SMR" id="Q3JMU0"/>
<dbReference type="EnsemblBacteria" id="ABA48613">
    <property type="protein sequence ID" value="ABA48613"/>
    <property type="gene ID" value="BURPS1710b_3749"/>
</dbReference>
<dbReference type="GeneID" id="93061805"/>
<dbReference type="KEGG" id="bpm:BURPS1710b_3749"/>
<dbReference type="HOGENOM" id="CLU_074407_2_0_4"/>
<dbReference type="Proteomes" id="UP000002700">
    <property type="component" value="Chromosome I"/>
</dbReference>
<dbReference type="GO" id="GO:0022625">
    <property type="term" value="C:cytosolic large ribosomal subunit"/>
    <property type="evidence" value="ECO:0007669"/>
    <property type="project" value="TreeGrafter"/>
</dbReference>
<dbReference type="GO" id="GO:0003735">
    <property type="term" value="F:structural constituent of ribosome"/>
    <property type="evidence" value="ECO:0007669"/>
    <property type="project" value="InterPro"/>
</dbReference>
<dbReference type="GO" id="GO:0006412">
    <property type="term" value="P:translation"/>
    <property type="evidence" value="ECO:0007669"/>
    <property type="project" value="UniProtKB-UniRule"/>
</dbReference>
<dbReference type="FunFam" id="3.90.1030.10:FF:000001">
    <property type="entry name" value="50S ribosomal protein L17"/>
    <property type="match status" value="1"/>
</dbReference>
<dbReference type="Gene3D" id="3.90.1030.10">
    <property type="entry name" value="Ribosomal protein L17"/>
    <property type="match status" value="1"/>
</dbReference>
<dbReference type="HAMAP" id="MF_01368">
    <property type="entry name" value="Ribosomal_bL17"/>
    <property type="match status" value="1"/>
</dbReference>
<dbReference type="InterPro" id="IPR000456">
    <property type="entry name" value="Ribosomal_bL17"/>
</dbReference>
<dbReference type="InterPro" id="IPR047859">
    <property type="entry name" value="Ribosomal_bL17_CS"/>
</dbReference>
<dbReference type="InterPro" id="IPR036373">
    <property type="entry name" value="Ribosomal_bL17_sf"/>
</dbReference>
<dbReference type="NCBIfam" id="TIGR00059">
    <property type="entry name" value="L17"/>
    <property type="match status" value="1"/>
</dbReference>
<dbReference type="PANTHER" id="PTHR14413:SF16">
    <property type="entry name" value="LARGE RIBOSOMAL SUBUNIT PROTEIN BL17M"/>
    <property type="match status" value="1"/>
</dbReference>
<dbReference type="PANTHER" id="PTHR14413">
    <property type="entry name" value="RIBOSOMAL PROTEIN L17"/>
    <property type="match status" value="1"/>
</dbReference>
<dbReference type="Pfam" id="PF01196">
    <property type="entry name" value="Ribosomal_L17"/>
    <property type="match status" value="1"/>
</dbReference>
<dbReference type="SUPFAM" id="SSF64263">
    <property type="entry name" value="Prokaryotic ribosomal protein L17"/>
    <property type="match status" value="1"/>
</dbReference>
<dbReference type="PROSITE" id="PS01167">
    <property type="entry name" value="RIBOSOMAL_L17"/>
    <property type="match status" value="1"/>
</dbReference>
<protein>
    <recommendedName>
        <fullName evidence="1">Large ribosomal subunit protein bL17</fullName>
    </recommendedName>
    <alternativeName>
        <fullName evidence="2">50S ribosomal protein L17</fullName>
    </alternativeName>
</protein>